<keyword id="KW-0342">GTP-binding</keyword>
<keyword id="KW-0378">Hydrolase</keyword>
<keyword id="KW-0479">Metal-binding</keyword>
<keyword id="KW-0547">Nucleotide-binding</keyword>
<keyword id="KW-0554">One-carbon metabolism</keyword>
<keyword id="KW-0862">Zinc</keyword>
<name>GCH1_BACAA</name>
<proteinExistence type="inferred from homology"/>
<sequence length="189" mass="21020">MAKVNLEQIEHAVRLILEAIGDDPNREGVLDTPKRVAKMYAEVFSGMHEDPKEHLHKVFGEDHEELVLVKDIPFYSMCEHHLVPFYGVAHVAYIPQGGKVTGLSKLARTVDTIARRPQLQERITSTVANSIMEVLEPHGVMVVVEAEHMCMTMRGVKKPGAKTVTTAVRGVLENDAAARSEILSFIKTK</sequence>
<reference key="1">
    <citation type="submission" date="2009-04" db="EMBL/GenBank/DDBJ databases">
        <title>Genome sequence of Bacillus anthracis A0248.</title>
        <authorList>
            <person name="Dodson R.J."/>
            <person name="Munk A.C."/>
            <person name="Bruce D."/>
            <person name="Detter C."/>
            <person name="Tapia R."/>
            <person name="Sutton G."/>
            <person name="Sims D."/>
            <person name="Brettin T."/>
        </authorList>
    </citation>
    <scope>NUCLEOTIDE SEQUENCE [LARGE SCALE GENOMIC DNA]</scope>
    <source>
        <strain>A0248</strain>
    </source>
</reference>
<comment type="catalytic activity">
    <reaction evidence="1">
        <text>GTP + H2O = 7,8-dihydroneopterin 3'-triphosphate + formate + H(+)</text>
        <dbReference type="Rhea" id="RHEA:17473"/>
        <dbReference type="ChEBI" id="CHEBI:15377"/>
        <dbReference type="ChEBI" id="CHEBI:15378"/>
        <dbReference type="ChEBI" id="CHEBI:15740"/>
        <dbReference type="ChEBI" id="CHEBI:37565"/>
        <dbReference type="ChEBI" id="CHEBI:58462"/>
        <dbReference type="EC" id="3.5.4.16"/>
    </reaction>
</comment>
<comment type="pathway">
    <text evidence="1">Cofactor biosynthesis; 7,8-dihydroneopterin triphosphate biosynthesis; 7,8-dihydroneopterin triphosphate from GTP: step 1/1.</text>
</comment>
<comment type="subunit">
    <text evidence="1">Homomer.</text>
</comment>
<comment type="similarity">
    <text evidence="1">Belongs to the GTP cyclohydrolase I family.</text>
</comment>
<dbReference type="EC" id="3.5.4.16" evidence="1"/>
<dbReference type="EMBL" id="CP001598">
    <property type="protein sequence ID" value="ACQ48362.1"/>
    <property type="molecule type" value="Genomic_DNA"/>
</dbReference>
<dbReference type="RefSeq" id="WP_001151482.1">
    <property type="nucleotide sequence ID" value="NC_012659.1"/>
</dbReference>
<dbReference type="SMR" id="C3P598"/>
<dbReference type="GeneID" id="93009529"/>
<dbReference type="KEGG" id="bai:BAA_1601"/>
<dbReference type="HOGENOM" id="CLU_049768_3_3_9"/>
<dbReference type="UniPathway" id="UPA00848">
    <property type="reaction ID" value="UER00151"/>
</dbReference>
<dbReference type="GO" id="GO:0005737">
    <property type="term" value="C:cytoplasm"/>
    <property type="evidence" value="ECO:0007669"/>
    <property type="project" value="TreeGrafter"/>
</dbReference>
<dbReference type="GO" id="GO:0005525">
    <property type="term" value="F:GTP binding"/>
    <property type="evidence" value="ECO:0007669"/>
    <property type="project" value="UniProtKB-KW"/>
</dbReference>
<dbReference type="GO" id="GO:0003934">
    <property type="term" value="F:GTP cyclohydrolase I activity"/>
    <property type="evidence" value="ECO:0007669"/>
    <property type="project" value="UniProtKB-UniRule"/>
</dbReference>
<dbReference type="GO" id="GO:0008270">
    <property type="term" value="F:zinc ion binding"/>
    <property type="evidence" value="ECO:0007669"/>
    <property type="project" value="UniProtKB-UniRule"/>
</dbReference>
<dbReference type="GO" id="GO:0006730">
    <property type="term" value="P:one-carbon metabolic process"/>
    <property type="evidence" value="ECO:0007669"/>
    <property type="project" value="UniProtKB-UniRule"/>
</dbReference>
<dbReference type="GO" id="GO:0006729">
    <property type="term" value="P:tetrahydrobiopterin biosynthetic process"/>
    <property type="evidence" value="ECO:0007669"/>
    <property type="project" value="TreeGrafter"/>
</dbReference>
<dbReference type="GO" id="GO:0046654">
    <property type="term" value="P:tetrahydrofolate biosynthetic process"/>
    <property type="evidence" value="ECO:0007669"/>
    <property type="project" value="UniProtKB-UniRule"/>
</dbReference>
<dbReference type="CDD" id="cd00642">
    <property type="entry name" value="GTP_cyclohydro1"/>
    <property type="match status" value="1"/>
</dbReference>
<dbReference type="FunFam" id="1.10.286.10:FF:000001">
    <property type="entry name" value="GTP cyclohydrolase 1"/>
    <property type="match status" value="1"/>
</dbReference>
<dbReference type="FunFam" id="3.30.1130.10:FF:000001">
    <property type="entry name" value="GTP cyclohydrolase 1"/>
    <property type="match status" value="1"/>
</dbReference>
<dbReference type="Gene3D" id="1.10.286.10">
    <property type="match status" value="1"/>
</dbReference>
<dbReference type="Gene3D" id="3.30.1130.10">
    <property type="match status" value="1"/>
</dbReference>
<dbReference type="HAMAP" id="MF_00223">
    <property type="entry name" value="FolE"/>
    <property type="match status" value="1"/>
</dbReference>
<dbReference type="InterPro" id="IPR043133">
    <property type="entry name" value="GTP-CH-I_C/QueF"/>
</dbReference>
<dbReference type="InterPro" id="IPR043134">
    <property type="entry name" value="GTP-CH-I_N"/>
</dbReference>
<dbReference type="InterPro" id="IPR001474">
    <property type="entry name" value="GTP_CycHdrlase_I"/>
</dbReference>
<dbReference type="InterPro" id="IPR018234">
    <property type="entry name" value="GTP_CycHdrlase_I_CS"/>
</dbReference>
<dbReference type="InterPro" id="IPR020602">
    <property type="entry name" value="GTP_CycHdrlase_I_dom"/>
</dbReference>
<dbReference type="NCBIfam" id="TIGR00063">
    <property type="entry name" value="folE"/>
    <property type="match status" value="1"/>
</dbReference>
<dbReference type="NCBIfam" id="NF006825">
    <property type="entry name" value="PRK09347.1-2"/>
    <property type="match status" value="1"/>
</dbReference>
<dbReference type="NCBIfam" id="NF006826">
    <property type="entry name" value="PRK09347.1-3"/>
    <property type="match status" value="1"/>
</dbReference>
<dbReference type="PANTHER" id="PTHR11109:SF7">
    <property type="entry name" value="GTP CYCLOHYDROLASE 1"/>
    <property type="match status" value="1"/>
</dbReference>
<dbReference type="PANTHER" id="PTHR11109">
    <property type="entry name" value="GTP CYCLOHYDROLASE I"/>
    <property type="match status" value="1"/>
</dbReference>
<dbReference type="Pfam" id="PF01227">
    <property type="entry name" value="GTP_cyclohydroI"/>
    <property type="match status" value="1"/>
</dbReference>
<dbReference type="SUPFAM" id="SSF55620">
    <property type="entry name" value="Tetrahydrobiopterin biosynthesis enzymes-like"/>
    <property type="match status" value="1"/>
</dbReference>
<dbReference type="PROSITE" id="PS00859">
    <property type="entry name" value="GTP_CYCLOHYDROL_1_1"/>
    <property type="match status" value="1"/>
</dbReference>
<dbReference type="PROSITE" id="PS00860">
    <property type="entry name" value="GTP_CYCLOHYDROL_1_2"/>
    <property type="match status" value="1"/>
</dbReference>
<protein>
    <recommendedName>
        <fullName evidence="1">GTP cyclohydrolase 1</fullName>
        <ecNumber evidence="1">3.5.4.16</ecNumber>
    </recommendedName>
    <alternativeName>
        <fullName evidence="1">GTP cyclohydrolase I</fullName>
        <shortName evidence="1">GTP-CH-I</shortName>
    </alternativeName>
</protein>
<evidence type="ECO:0000255" key="1">
    <source>
        <dbReference type="HAMAP-Rule" id="MF_00223"/>
    </source>
</evidence>
<gene>
    <name evidence="1" type="primary">folE</name>
    <name type="ordered locus">BAA_1601</name>
</gene>
<feature type="chain" id="PRO_1000124906" description="GTP cyclohydrolase 1">
    <location>
        <begin position="1"/>
        <end position="189"/>
    </location>
</feature>
<feature type="binding site" evidence="1">
    <location>
        <position position="78"/>
    </location>
    <ligand>
        <name>Zn(2+)</name>
        <dbReference type="ChEBI" id="CHEBI:29105"/>
    </ligand>
</feature>
<feature type="binding site" evidence="1">
    <location>
        <position position="81"/>
    </location>
    <ligand>
        <name>Zn(2+)</name>
        <dbReference type="ChEBI" id="CHEBI:29105"/>
    </ligand>
</feature>
<feature type="binding site" evidence="1">
    <location>
        <position position="150"/>
    </location>
    <ligand>
        <name>Zn(2+)</name>
        <dbReference type="ChEBI" id="CHEBI:29105"/>
    </ligand>
</feature>
<organism>
    <name type="scientific">Bacillus anthracis (strain A0248)</name>
    <dbReference type="NCBI Taxonomy" id="592021"/>
    <lineage>
        <taxon>Bacteria</taxon>
        <taxon>Bacillati</taxon>
        <taxon>Bacillota</taxon>
        <taxon>Bacilli</taxon>
        <taxon>Bacillales</taxon>
        <taxon>Bacillaceae</taxon>
        <taxon>Bacillus</taxon>
        <taxon>Bacillus cereus group</taxon>
    </lineage>
</organism>
<accession>C3P598</accession>